<proteinExistence type="inferred from homology"/>
<evidence type="ECO:0000250" key="1"/>
<evidence type="ECO:0000256" key="2">
    <source>
        <dbReference type="SAM" id="MobiDB-lite"/>
    </source>
</evidence>
<evidence type="ECO:0000305" key="3"/>
<sequence>MAANYWESTQRKHWLFTKDELAAMRAKLEAEEPNLVASFPLPQLRHLNIYFNQQINRLGKRMGLRQQALATAQVYIKRFYTKVEIRRTNPHHVLVTALYLACKMEECPQHIRLMANEARGFWPTDFQSQTEVARIGECEFYLISEMSSHLIVHSPYRTLTSLQGELGLAQEDVNLAWSVINDHYMTDLPLLHPPHVIALTAILLALVLRQDPSGRLPGTAASASGLVAASAALAQAQAQAQARAAMMAGGGQTVPGLTPQSSSGLQAMLPPQSPAGEGPAEGNKNPRMAKVHRFAAWLSDSNIDIEAMVDCTQELISFYECHEQYNDKNTREQINRFVKARGLDK</sequence>
<reference key="1">
    <citation type="journal article" date="2003" name="Nucleic Acids Res.">
        <title>What's in the genome of a filamentous fungus? Analysis of the Neurospora genome sequence.</title>
        <authorList>
            <person name="Mannhaupt G."/>
            <person name="Montrone C."/>
            <person name="Haase D."/>
            <person name="Mewes H.-W."/>
            <person name="Aign V."/>
            <person name="Hoheisel J.D."/>
            <person name="Fartmann B."/>
            <person name="Nyakatura G."/>
            <person name="Kempken F."/>
            <person name="Maier J."/>
            <person name="Schulte U."/>
        </authorList>
    </citation>
    <scope>NUCLEOTIDE SEQUENCE [LARGE SCALE GENOMIC DNA]</scope>
    <source>
        <strain>ATCC 24698 / 74-OR23-1A / CBS 708.71 / DSM 1257 / FGSC 987</strain>
    </source>
</reference>
<reference key="2">
    <citation type="journal article" date="2003" name="Nature">
        <title>The genome sequence of the filamentous fungus Neurospora crassa.</title>
        <authorList>
            <person name="Galagan J.E."/>
            <person name="Calvo S.E."/>
            <person name="Borkovich K.A."/>
            <person name="Selker E.U."/>
            <person name="Read N.D."/>
            <person name="Jaffe D.B."/>
            <person name="FitzHugh W."/>
            <person name="Ma L.-J."/>
            <person name="Smirnov S."/>
            <person name="Purcell S."/>
            <person name="Rehman B."/>
            <person name="Elkins T."/>
            <person name="Engels R."/>
            <person name="Wang S."/>
            <person name="Nielsen C.B."/>
            <person name="Butler J."/>
            <person name="Endrizzi M."/>
            <person name="Qui D."/>
            <person name="Ianakiev P."/>
            <person name="Bell-Pedersen D."/>
            <person name="Nelson M.A."/>
            <person name="Werner-Washburne M."/>
            <person name="Selitrennikoff C.P."/>
            <person name="Kinsey J.A."/>
            <person name="Braun E.L."/>
            <person name="Zelter A."/>
            <person name="Schulte U."/>
            <person name="Kothe G.O."/>
            <person name="Jedd G."/>
            <person name="Mewes H.-W."/>
            <person name="Staben C."/>
            <person name="Marcotte E."/>
            <person name="Greenberg D."/>
            <person name="Roy A."/>
            <person name="Foley K."/>
            <person name="Naylor J."/>
            <person name="Stange-Thomann N."/>
            <person name="Barrett R."/>
            <person name="Gnerre S."/>
            <person name="Kamal M."/>
            <person name="Kamvysselis M."/>
            <person name="Mauceli E.W."/>
            <person name="Bielke C."/>
            <person name="Rudd S."/>
            <person name="Frishman D."/>
            <person name="Krystofova S."/>
            <person name="Rasmussen C."/>
            <person name="Metzenberg R.L."/>
            <person name="Perkins D.D."/>
            <person name="Kroken S."/>
            <person name="Cogoni C."/>
            <person name="Macino G."/>
            <person name="Catcheside D.E.A."/>
            <person name="Li W."/>
            <person name="Pratt R.J."/>
            <person name="Osmani S.A."/>
            <person name="DeSouza C.P.C."/>
            <person name="Glass N.L."/>
            <person name="Orbach M.J."/>
            <person name="Berglund J.A."/>
            <person name="Voelker R."/>
            <person name="Yarden O."/>
            <person name="Plamann M."/>
            <person name="Seiler S."/>
            <person name="Dunlap J.C."/>
            <person name="Radford A."/>
            <person name="Aramayo R."/>
            <person name="Natvig D.O."/>
            <person name="Alex L.A."/>
            <person name="Mannhaupt G."/>
            <person name="Ebbole D.J."/>
            <person name="Freitag M."/>
            <person name="Paulsen I."/>
            <person name="Sachs M.S."/>
            <person name="Lander E.S."/>
            <person name="Nusbaum C."/>
            <person name="Birren B.W."/>
        </authorList>
    </citation>
    <scope>NUCLEOTIDE SEQUENCE [LARGE SCALE GENOMIC DNA]</scope>
    <source>
        <strain>ATCC 24698 / 74-OR23-1A / CBS 708.71 / DSM 1257 / FGSC 987</strain>
    </source>
</reference>
<feature type="chain" id="PRO_0000314279" description="RNA polymerase II holoenzyme cyclin-like subunit">
    <location>
        <begin position="1"/>
        <end position="345"/>
    </location>
</feature>
<feature type="domain" description="Cyclin N-terminal">
    <location>
        <begin position="53"/>
        <end position="144"/>
    </location>
</feature>
<feature type="region of interest" description="Disordered" evidence="2">
    <location>
        <begin position="256"/>
        <end position="285"/>
    </location>
</feature>
<protein>
    <recommendedName>
        <fullName>RNA polymerase II holoenzyme cyclin-like subunit</fullName>
    </recommendedName>
</protein>
<comment type="function">
    <text evidence="1">Component of the srb8-11 complex. The srb8-11 complex is a regulatory module of the Mediator complex which is itself involved in regulation of basal and activated RNA polymerase II-dependent transcription. The srb8-11 complex may be involved in the transcriptional repression of a subset of genes regulated by Mediator. It may inhibit the association of the Mediator complex with RNA polymerase II to form the holoenzyme complex. The srb8-11 complex phosphorylates the C-terminal domain (CTD) of the largest subunit of RNA polymerase II (By similarity).</text>
</comment>
<comment type="subunit">
    <text evidence="1">Component of the srb8-11 complex, a regulatory module of the Mediator complex.</text>
</comment>
<comment type="subcellular location">
    <subcellularLocation>
        <location evidence="3">Nucleus</location>
    </subcellularLocation>
</comment>
<comment type="similarity">
    <text evidence="3">Belongs to the cyclin family. Cyclin C subfamily.</text>
</comment>
<comment type="sequence caution" evidence="3">
    <conflict type="erroneous gene model prediction">
        <sequence resource="EMBL-CDS" id="CAC18151"/>
    </conflict>
</comment>
<keyword id="KW-0010">Activator</keyword>
<keyword id="KW-0195">Cyclin</keyword>
<keyword id="KW-0539">Nucleus</keyword>
<keyword id="KW-1185">Reference proteome</keyword>
<keyword id="KW-0678">Repressor</keyword>
<keyword id="KW-0804">Transcription</keyword>
<keyword id="KW-0805">Transcription regulation</keyword>
<dbReference type="EMBL" id="AL451012">
    <property type="protein sequence ID" value="CAC18151.1"/>
    <property type="status" value="ALT_SEQ"/>
    <property type="molecule type" value="Genomic_DNA"/>
</dbReference>
<dbReference type="EMBL" id="CM002237">
    <property type="protein sequence ID" value="ESA43662.1"/>
    <property type="molecule type" value="Genomic_DNA"/>
</dbReference>
<dbReference type="EMBL" id="CM002237">
    <property type="protein sequence ID" value="ESA43663.1"/>
    <property type="molecule type" value="Genomic_DNA"/>
</dbReference>
<dbReference type="RefSeq" id="XP_011393463.1">
    <property type="nucleotide sequence ID" value="XM_011395161.1"/>
</dbReference>
<dbReference type="RefSeq" id="XP_011393464.1">
    <property type="nucleotide sequence ID" value="XM_011395162.1"/>
</dbReference>
<dbReference type="SMR" id="Q9HE63"/>
<dbReference type="FunCoup" id="Q9HE63">
    <property type="interactions" value="876"/>
</dbReference>
<dbReference type="STRING" id="367110.Q9HE63"/>
<dbReference type="PaxDb" id="5141-EFNCRP00000001871"/>
<dbReference type="EnsemblFungi" id="ESA43662">
    <property type="protein sequence ID" value="ESA43662"/>
    <property type="gene ID" value="NCU01563"/>
</dbReference>
<dbReference type="EnsemblFungi" id="ESA43663">
    <property type="protein sequence ID" value="ESA43663"/>
    <property type="gene ID" value="NCU01563"/>
</dbReference>
<dbReference type="GeneID" id="3872362"/>
<dbReference type="KEGG" id="ncr:NCU01563"/>
<dbReference type="VEuPathDB" id="FungiDB:NCU01563"/>
<dbReference type="HOGENOM" id="CLU_034754_2_0_1"/>
<dbReference type="InParanoid" id="Q9HE63"/>
<dbReference type="OrthoDB" id="10266018at2759"/>
<dbReference type="Proteomes" id="UP000001805">
    <property type="component" value="Chromosome 6, Linkage Group II"/>
</dbReference>
<dbReference type="GO" id="GO:0016592">
    <property type="term" value="C:mediator complex"/>
    <property type="evidence" value="ECO:0000318"/>
    <property type="project" value="GO_Central"/>
</dbReference>
<dbReference type="GO" id="GO:0005634">
    <property type="term" value="C:nucleus"/>
    <property type="evidence" value="ECO:0000318"/>
    <property type="project" value="GO_Central"/>
</dbReference>
<dbReference type="GO" id="GO:0016538">
    <property type="term" value="F:cyclin-dependent protein serine/threonine kinase regulator activity"/>
    <property type="evidence" value="ECO:0000318"/>
    <property type="project" value="GO_Central"/>
</dbReference>
<dbReference type="GO" id="GO:0045944">
    <property type="term" value="P:positive regulation of transcription by RNA polymerase II"/>
    <property type="evidence" value="ECO:0000318"/>
    <property type="project" value="GO_Central"/>
</dbReference>
<dbReference type="CDD" id="cd20513">
    <property type="entry name" value="CYCLIN_CCNC_rpt1"/>
    <property type="match status" value="1"/>
</dbReference>
<dbReference type="CDD" id="cd20546">
    <property type="entry name" value="CYCLIN_SpCG1C_ScCTK2-like_rpt2"/>
    <property type="match status" value="1"/>
</dbReference>
<dbReference type="Gene3D" id="1.10.472.10">
    <property type="entry name" value="Cyclin-like"/>
    <property type="match status" value="2"/>
</dbReference>
<dbReference type="InterPro" id="IPR013763">
    <property type="entry name" value="Cyclin-like_dom"/>
</dbReference>
<dbReference type="InterPro" id="IPR036915">
    <property type="entry name" value="Cyclin-like_sf"/>
</dbReference>
<dbReference type="InterPro" id="IPR043198">
    <property type="entry name" value="Cyclin/Ssn8"/>
</dbReference>
<dbReference type="InterPro" id="IPR006671">
    <property type="entry name" value="Cyclin_N"/>
</dbReference>
<dbReference type="PANTHER" id="PTHR10026">
    <property type="entry name" value="CYCLIN"/>
    <property type="match status" value="1"/>
</dbReference>
<dbReference type="Pfam" id="PF00134">
    <property type="entry name" value="Cyclin_N"/>
    <property type="match status" value="1"/>
</dbReference>
<dbReference type="PIRSF" id="PIRSF028758">
    <property type="entry name" value="Cyclin, C/H/G types"/>
    <property type="match status" value="1"/>
</dbReference>
<dbReference type="SMART" id="SM00385">
    <property type="entry name" value="CYCLIN"/>
    <property type="match status" value="1"/>
</dbReference>
<dbReference type="SUPFAM" id="SSF47954">
    <property type="entry name" value="Cyclin-like"/>
    <property type="match status" value="2"/>
</dbReference>
<organism>
    <name type="scientific">Neurospora crassa (strain ATCC 24698 / 74-OR23-1A / CBS 708.71 / DSM 1257 / FGSC 987)</name>
    <dbReference type="NCBI Taxonomy" id="367110"/>
    <lineage>
        <taxon>Eukaryota</taxon>
        <taxon>Fungi</taxon>
        <taxon>Dikarya</taxon>
        <taxon>Ascomycota</taxon>
        <taxon>Pezizomycotina</taxon>
        <taxon>Sordariomycetes</taxon>
        <taxon>Sordariomycetidae</taxon>
        <taxon>Sordariales</taxon>
        <taxon>Sordariaceae</taxon>
        <taxon>Neurospora</taxon>
    </lineage>
</organism>
<name>SSN8_NEUCR</name>
<accession>Q9HE63</accession>
<accession>Q1K4X6</accession>
<accession>V5INM8</accession>
<gene>
    <name type="primary">ssn8</name>
    <name type="synonym">srb11</name>
    <name type="ORF">B21O8.140</name>
    <name type="ORF">NCU01563</name>
</gene>